<proteinExistence type="inferred from homology"/>
<evidence type="ECO:0000250" key="1"/>
<evidence type="ECO:0000250" key="2">
    <source>
        <dbReference type="UniProtKB" id="P43601"/>
    </source>
</evidence>
<evidence type="ECO:0000256" key="3">
    <source>
        <dbReference type="SAM" id="MobiDB-lite"/>
    </source>
</evidence>
<evidence type="ECO:0000305" key="4"/>
<protein>
    <recommendedName>
        <fullName>Autophagy-related protein 18</fullName>
    </recommendedName>
</protein>
<sequence>MLQTSSSSATASLQQQLSKQYANSFSNDGSSFSSKNNQQYSEIVNYISFNQDASCITIGLKNGYKIFNCQPNFGRSFQFKNDESTGIVEMLYCTSLLATVAQGEEIGSSPRKLKIINTKTKSTICDLIFPSTILQVKLTNTRLIVVLEDQIYLYDITTMKLLHTIETSPNLSGLSAISYDDSNSYLAYPSPPKTITHDSLLASGINTNGGSNSTQNNISSVSNTPNRVGDVIIFNLTSLQPISVIEAHKSTIASMAFSNNGLYLATASDKGTIVRIFEVATGTKLYQFRRGTYPTKIYSLRFSADDKYVLATSSSLTVHIFRLGEEEALETKHKKKKIPAVATILEEETEGSQSNEQTKSIKRNSEEFEDIRDDGDDSDVDDEDGDIDDESLEVIPAKQRKLSQGSTNSYTSVNSEDVQSNSPKTEPLIDQNRLSMARIIRRSSQTLGRKAAQKMGDFLPSRFSSILEPTRNFASLKINAHSKDTKSVAVMNNVLQQDLIPQTYLASDNASAKQDFMEVSLFHIYVVTTEGMLYTYGLDPERGGDCILLNSHCILDEY</sequence>
<organism>
    <name type="scientific">Candida albicans (strain SC5314 / ATCC MYA-2876)</name>
    <name type="common">Yeast</name>
    <dbReference type="NCBI Taxonomy" id="237561"/>
    <lineage>
        <taxon>Eukaryota</taxon>
        <taxon>Fungi</taxon>
        <taxon>Dikarya</taxon>
        <taxon>Ascomycota</taxon>
        <taxon>Saccharomycotina</taxon>
        <taxon>Pichiomycetes</taxon>
        <taxon>Debaryomycetaceae</taxon>
        <taxon>Candida/Lodderomyces clade</taxon>
        <taxon>Candida</taxon>
    </lineage>
</organism>
<comment type="function">
    <text evidence="1">The PI(3,5)P2 regulatory complex regulates both the synthesis and turnover of phosphatidylinositol 3,5-bisphosphate (PtdIns(3,5)P2). Necessary for proper vacuole morphology. Plays an important role in osmotically-induced vacuole fragmentation. Required for cytoplasm to vacuole transport (Cvt) vesicle formation, pexophagy and starvation-induced autophagy. Involved in correct ATG9 trafficking to the pre-autophagosomal structure. Might also be involved in premeiotic DNA replication (By similarity).</text>
</comment>
<comment type="subunit">
    <text evidence="1">Component of the PI(3,5)P2 regulatory complex.</text>
</comment>
<comment type="subcellular location">
    <subcellularLocation>
        <location evidence="1">Preautophagosomal structure membrane</location>
        <topology evidence="1">Peripheral membrane protein</topology>
    </subcellularLocation>
    <subcellularLocation>
        <location evidence="1">Vacuole membrane</location>
        <topology evidence="1">Peripheral membrane protein</topology>
    </subcellularLocation>
    <subcellularLocation>
        <location evidence="1">Endosome membrane</location>
        <topology evidence="1">Peripheral membrane protein</topology>
    </subcellularLocation>
</comment>
<comment type="domain">
    <text evidence="1">The N-terminus might form a beta-propeller domain involved in specific binding to phosphatidylinositol 3,5-bisphosphate (PIP2), leading to the association of the protein to the membrane.</text>
</comment>
<comment type="domain">
    <text evidence="2">The L/FRRG motif is essential for the cytoplasm to vacuole transport (Cvt) pathway, for the recruitment of ATG8 and ATG16 to the PAS in nutrient-rich medium, and for its recruitment to and dissociation from the PAS under starvation conditions.</text>
</comment>
<comment type="similarity">
    <text evidence="4">Belongs to the WD repeat PROPPIN family.</text>
</comment>
<feature type="chain" id="PRO_0000050862" description="Autophagy-related protein 18">
    <location>
        <begin position="1"/>
        <end position="558"/>
    </location>
</feature>
<feature type="repeat" description="WD 1">
    <location>
        <begin position="247"/>
        <end position="287"/>
    </location>
</feature>
<feature type="repeat" description="WD 2">
    <location>
        <begin position="292"/>
        <end position="331"/>
    </location>
</feature>
<feature type="region of interest" description="Disordered" evidence="3">
    <location>
        <begin position="344"/>
        <end position="426"/>
    </location>
</feature>
<feature type="short sequence motif" description="L/FRRG motif" evidence="2">
    <location>
        <begin position="288"/>
        <end position="292"/>
    </location>
</feature>
<feature type="compositionally biased region" description="Acidic residues" evidence="3">
    <location>
        <begin position="367"/>
        <end position="392"/>
    </location>
</feature>
<feature type="compositionally biased region" description="Polar residues" evidence="3">
    <location>
        <begin position="402"/>
        <end position="424"/>
    </location>
</feature>
<dbReference type="EMBL" id="CP017623">
    <property type="protein sequence ID" value="AOW25741.1"/>
    <property type="molecule type" value="Genomic_DNA"/>
</dbReference>
<dbReference type="RefSeq" id="XP_719026.2">
    <property type="nucleotide sequence ID" value="XM_713933.2"/>
</dbReference>
<dbReference type="SMR" id="Q5ABA6"/>
<dbReference type="FunCoup" id="Q5ABA6">
    <property type="interactions" value="586"/>
</dbReference>
<dbReference type="STRING" id="237561.Q5ABA6"/>
<dbReference type="EnsemblFungi" id="C1_00430W_A-T">
    <property type="protein sequence ID" value="C1_00430W_A-T-p1"/>
    <property type="gene ID" value="C1_00430W_A"/>
</dbReference>
<dbReference type="GeneID" id="3639285"/>
<dbReference type="KEGG" id="cal:CAALFM_C100430WA"/>
<dbReference type="CGD" id="CAL0000198706">
    <property type="gene designation" value="ATG18"/>
</dbReference>
<dbReference type="VEuPathDB" id="FungiDB:C1_00430W_A"/>
<dbReference type="eggNOG" id="KOG2110">
    <property type="taxonomic scope" value="Eukaryota"/>
</dbReference>
<dbReference type="HOGENOM" id="CLU_025895_5_2_1"/>
<dbReference type="InParanoid" id="Q5ABA6"/>
<dbReference type="OrthoDB" id="1667587at2759"/>
<dbReference type="PRO" id="PR:Q5ABA6"/>
<dbReference type="Proteomes" id="UP000000559">
    <property type="component" value="Chromosome 1"/>
</dbReference>
<dbReference type="GO" id="GO:0005829">
    <property type="term" value="C:cytosol"/>
    <property type="evidence" value="ECO:0000318"/>
    <property type="project" value="GO_Central"/>
</dbReference>
<dbReference type="GO" id="GO:0010008">
    <property type="term" value="C:endosome membrane"/>
    <property type="evidence" value="ECO:0007669"/>
    <property type="project" value="UniProtKB-SubCell"/>
</dbReference>
<dbReference type="GO" id="GO:0000329">
    <property type="term" value="C:fungal-type vacuole membrane"/>
    <property type="evidence" value="ECO:0000314"/>
    <property type="project" value="CGD"/>
</dbReference>
<dbReference type="GO" id="GO:0070772">
    <property type="term" value="C:PAS complex"/>
    <property type="evidence" value="ECO:0007669"/>
    <property type="project" value="EnsemblFungi"/>
</dbReference>
<dbReference type="GO" id="GO:0061908">
    <property type="term" value="C:phagophore"/>
    <property type="evidence" value="ECO:0007669"/>
    <property type="project" value="EnsemblFungi"/>
</dbReference>
<dbReference type="GO" id="GO:0034045">
    <property type="term" value="C:phagophore assembly site membrane"/>
    <property type="evidence" value="ECO:0000318"/>
    <property type="project" value="GO_Central"/>
</dbReference>
<dbReference type="GO" id="GO:0080025">
    <property type="term" value="F:phosphatidylinositol-3,5-bisphosphate binding"/>
    <property type="evidence" value="ECO:0000318"/>
    <property type="project" value="GO_Central"/>
</dbReference>
<dbReference type="GO" id="GO:0032266">
    <property type="term" value="F:phosphatidylinositol-3-phosphate binding"/>
    <property type="evidence" value="ECO:0000318"/>
    <property type="project" value="GO_Central"/>
</dbReference>
<dbReference type="GO" id="GO:0070273">
    <property type="term" value="F:phosphatidylinositol-4-phosphate binding"/>
    <property type="evidence" value="ECO:0007669"/>
    <property type="project" value="EnsemblFungi"/>
</dbReference>
<dbReference type="GO" id="GO:0030674">
    <property type="term" value="F:protein-macromolecule adaptor activity"/>
    <property type="evidence" value="ECO:0000318"/>
    <property type="project" value="GO_Central"/>
</dbReference>
<dbReference type="GO" id="GO:0043130">
    <property type="term" value="F:ubiquitin binding"/>
    <property type="evidence" value="ECO:0007669"/>
    <property type="project" value="EnsemblFungi"/>
</dbReference>
<dbReference type="GO" id="GO:0000422">
    <property type="term" value="P:autophagy of mitochondrion"/>
    <property type="evidence" value="ECO:0000318"/>
    <property type="project" value="GO_Central"/>
</dbReference>
<dbReference type="GO" id="GO:0006995">
    <property type="term" value="P:cellular response to nitrogen starvation"/>
    <property type="evidence" value="ECO:0000315"/>
    <property type="project" value="CGD"/>
</dbReference>
<dbReference type="GO" id="GO:0032258">
    <property type="term" value="P:cytoplasm to vacuole targeting by the Cvt pathway"/>
    <property type="evidence" value="ECO:0007669"/>
    <property type="project" value="EnsemblFungi"/>
</dbReference>
<dbReference type="GO" id="GO:0006974">
    <property type="term" value="P:DNA damage response"/>
    <property type="evidence" value="ECO:0000315"/>
    <property type="project" value="CGD"/>
</dbReference>
<dbReference type="GO" id="GO:0061723">
    <property type="term" value="P:glycophagy"/>
    <property type="evidence" value="ECO:0000318"/>
    <property type="project" value="GO_Central"/>
</dbReference>
<dbReference type="GO" id="GO:0045324">
    <property type="term" value="P:late endosome to vacuole transport"/>
    <property type="evidence" value="ECO:0007669"/>
    <property type="project" value="EnsemblFungi"/>
</dbReference>
<dbReference type="GO" id="GO:0044804">
    <property type="term" value="P:nucleophagy"/>
    <property type="evidence" value="ECO:0000318"/>
    <property type="project" value="GO_Central"/>
</dbReference>
<dbReference type="GO" id="GO:0000425">
    <property type="term" value="P:pexophagy"/>
    <property type="evidence" value="ECO:0000318"/>
    <property type="project" value="GO_Central"/>
</dbReference>
<dbReference type="GO" id="GO:0034727">
    <property type="term" value="P:piecemeal microautophagy of the nucleus"/>
    <property type="evidence" value="ECO:0007669"/>
    <property type="project" value="EnsemblFungi"/>
</dbReference>
<dbReference type="GO" id="GO:0044090">
    <property type="term" value="P:positive regulation of vacuole organization"/>
    <property type="evidence" value="ECO:0007669"/>
    <property type="project" value="EnsemblFungi"/>
</dbReference>
<dbReference type="GO" id="GO:0034497">
    <property type="term" value="P:protein localization to phagophore assembly site"/>
    <property type="evidence" value="ECO:0000318"/>
    <property type="project" value="GO_Central"/>
</dbReference>
<dbReference type="GO" id="GO:0006624">
    <property type="term" value="P:vacuolar protein processing"/>
    <property type="evidence" value="ECO:0007669"/>
    <property type="project" value="EnsemblFungi"/>
</dbReference>
<dbReference type="FunFam" id="2.130.10.10:FF:001928">
    <property type="entry name" value="Autophagy-related protein 18"/>
    <property type="match status" value="1"/>
</dbReference>
<dbReference type="Gene3D" id="2.130.10.10">
    <property type="entry name" value="YVTN repeat-like/Quinoprotein amine dehydrogenase"/>
    <property type="match status" value="1"/>
</dbReference>
<dbReference type="InterPro" id="IPR048720">
    <property type="entry name" value="PROPPIN"/>
</dbReference>
<dbReference type="InterPro" id="IPR015943">
    <property type="entry name" value="WD40/YVTN_repeat-like_dom_sf"/>
</dbReference>
<dbReference type="InterPro" id="IPR036322">
    <property type="entry name" value="WD40_repeat_dom_sf"/>
</dbReference>
<dbReference type="InterPro" id="IPR001680">
    <property type="entry name" value="WD40_rpt"/>
</dbReference>
<dbReference type="PANTHER" id="PTHR11227">
    <property type="entry name" value="WD-REPEAT PROTEIN INTERACTING WITH PHOSPHOINOSIDES WIPI -RELATED"/>
    <property type="match status" value="1"/>
</dbReference>
<dbReference type="Pfam" id="PF21032">
    <property type="entry name" value="PROPPIN"/>
    <property type="match status" value="2"/>
</dbReference>
<dbReference type="SMART" id="SM00320">
    <property type="entry name" value="WD40"/>
    <property type="match status" value="2"/>
</dbReference>
<dbReference type="SUPFAM" id="SSF50978">
    <property type="entry name" value="WD40 repeat-like"/>
    <property type="match status" value="1"/>
</dbReference>
<dbReference type="PROSITE" id="PS50294">
    <property type="entry name" value="WD_REPEATS_REGION"/>
    <property type="match status" value="1"/>
</dbReference>
<keyword id="KW-0072">Autophagy</keyword>
<keyword id="KW-0967">Endosome</keyword>
<keyword id="KW-0472">Membrane</keyword>
<keyword id="KW-0653">Protein transport</keyword>
<keyword id="KW-1185">Reference proteome</keyword>
<keyword id="KW-0677">Repeat</keyword>
<keyword id="KW-0813">Transport</keyword>
<keyword id="KW-0926">Vacuole</keyword>
<keyword id="KW-0853">WD repeat</keyword>
<name>ATG18_CANAL</name>
<reference key="1">
    <citation type="journal article" date="2004" name="Proc. Natl. Acad. Sci. U.S.A.">
        <title>The diploid genome sequence of Candida albicans.</title>
        <authorList>
            <person name="Jones T."/>
            <person name="Federspiel N.A."/>
            <person name="Chibana H."/>
            <person name="Dungan J."/>
            <person name="Kalman S."/>
            <person name="Magee B.B."/>
            <person name="Newport G."/>
            <person name="Thorstenson Y.R."/>
            <person name="Agabian N."/>
            <person name="Magee P.T."/>
            <person name="Davis R.W."/>
            <person name="Scherer S."/>
        </authorList>
    </citation>
    <scope>NUCLEOTIDE SEQUENCE [LARGE SCALE GENOMIC DNA]</scope>
    <source>
        <strain>SC5314 / ATCC MYA-2876</strain>
    </source>
</reference>
<reference key="2">
    <citation type="journal article" date="2007" name="Genome Biol.">
        <title>Assembly of the Candida albicans genome into sixteen supercontigs aligned on the eight chromosomes.</title>
        <authorList>
            <person name="van het Hoog M."/>
            <person name="Rast T.J."/>
            <person name="Martchenko M."/>
            <person name="Grindle S."/>
            <person name="Dignard D."/>
            <person name="Hogues H."/>
            <person name="Cuomo C."/>
            <person name="Berriman M."/>
            <person name="Scherer S."/>
            <person name="Magee B.B."/>
            <person name="Whiteway M."/>
            <person name="Chibana H."/>
            <person name="Nantel A."/>
            <person name="Magee P.T."/>
        </authorList>
    </citation>
    <scope>GENOME REANNOTATION</scope>
    <source>
        <strain>SC5314 / ATCC MYA-2876</strain>
    </source>
</reference>
<reference key="3">
    <citation type="journal article" date="2013" name="Genome Biol.">
        <title>Assembly of a phased diploid Candida albicans genome facilitates allele-specific measurements and provides a simple model for repeat and indel structure.</title>
        <authorList>
            <person name="Muzzey D."/>
            <person name="Schwartz K."/>
            <person name="Weissman J.S."/>
            <person name="Sherlock G."/>
        </authorList>
    </citation>
    <scope>NUCLEOTIDE SEQUENCE [LARGE SCALE GENOMIC DNA]</scope>
    <scope>GENOME REANNOTATION</scope>
    <source>
        <strain>SC5314 / ATCC MYA-2876</strain>
    </source>
</reference>
<accession>Q5ABA6</accession>
<accession>A0A1D8PC80</accession>
<gene>
    <name type="primary">ATG18</name>
    <name type="ordered locus">CAALFM_C100430WA</name>
    <name type="ORF">CaO19.13485</name>
    <name type="ORF">CaO19.6064</name>
</gene>